<organism>
    <name type="scientific">Frog virus 3 (isolate Goorha)</name>
    <name type="common">FV-3</name>
    <dbReference type="NCBI Taxonomy" id="654924"/>
    <lineage>
        <taxon>Viruses</taxon>
        <taxon>Varidnaviria</taxon>
        <taxon>Bamfordvirae</taxon>
        <taxon>Nucleocytoviricota</taxon>
        <taxon>Megaviricetes</taxon>
        <taxon>Pimascovirales</taxon>
        <taxon>Iridoviridae</taxon>
        <taxon>Alphairidovirinae</taxon>
        <taxon>Ranavirus</taxon>
        <taxon>Frog virus 3</taxon>
    </lineage>
</organism>
<protein>
    <recommendedName>
        <fullName>Uncharacterized protein 020R</fullName>
    </recommendedName>
</protein>
<accession>Q6GZV5</accession>
<sequence>MLQNYAIVLGMAVAVAIWYFFKIEEEAPPGPNPPKPDPPKPDPPKMHMPKKKPHWMDPHLTGSQTVQYSRNRSMGDPIRGDLPIIPRDDGWFSTAANPAHTLHAGALSMIAPASTGGGLTVNKLISAYADKGNAMSGRHNSPSYYGSS</sequence>
<comment type="subcellular location">
    <subcellularLocation>
        <location evidence="3">Host membrane</location>
        <topology evidence="3">Single-pass membrane protein</topology>
    </subcellularLocation>
</comment>
<name>020R_FRG3G</name>
<reference key="1">
    <citation type="journal article" date="2004" name="Virology">
        <title>Comparative genomic analyses of frog virus 3, type species of the genus Ranavirus (family Iridoviridae).</title>
        <authorList>
            <person name="Tan W.G."/>
            <person name="Barkman T.J."/>
            <person name="Gregory Chinchar V."/>
            <person name="Essani K."/>
        </authorList>
    </citation>
    <scope>NUCLEOTIDE SEQUENCE [LARGE SCALE GENOMIC DNA]</scope>
</reference>
<feature type="chain" id="PRO_0000410545" description="Uncharacterized protein 020R">
    <location>
        <begin position="1"/>
        <end position="148"/>
    </location>
</feature>
<feature type="transmembrane region" description="Helical" evidence="1">
    <location>
        <begin position="1"/>
        <end position="21"/>
    </location>
</feature>
<feature type="region of interest" description="Disordered" evidence="2">
    <location>
        <begin position="27"/>
        <end position="61"/>
    </location>
</feature>
<dbReference type="EMBL" id="AY548484">
    <property type="protein sequence ID" value="AAT09679.1"/>
    <property type="molecule type" value="Genomic_DNA"/>
</dbReference>
<dbReference type="RefSeq" id="YP_031598.1">
    <property type="nucleotide sequence ID" value="NC_005946.1"/>
</dbReference>
<dbReference type="SMR" id="Q6GZV5"/>
<dbReference type="KEGG" id="vg:2947740"/>
<dbReference type="Proteomes" id="UP000008770">
    <property type="component" value="Segment"/>
</dbReference>
<dbReference type="GO" id="GO:0033644">
    <property type="term" value="C:host cell membrane"/>
    <property type="evidence" value="ECO:0007669"/>
    <property type="project" value="UniProtKB-SubCell"/>
</dbReference>
<dbReference type="GO" id="GO:0016020">
    <property type="term" value="C:membrane"/>
    <property type="evidence" value="ECO:0007669"/>
    <property type="project" value="UniProtKB-KW"/>
</dbReference>
<dbReference type="InterPro" id="IPR043882">
    <property type="entry name" value="DUF5850"/>
</dbReference>
<dbReference type="Pfam" id="PF19168">
    <property type="entry name" value="DUF5850"/>
    <property type="match status" value="1"/>
</dbReference>
<proteinExistence type="predicted"/>
<keyword id="KW-1043">Host membrane</keyword>
<keyword id="KW-0472">Membrane</keyword>
<keyword id="KW-1185">Reference proteome</keyword>
<keyword id="KW-0812">Transmembrane</keyword>
<keyword id="KW-1133">Transmembrane helix</keyword>
<evidence type="ECO:0000255" key="1"/>
<evidence type="ECO:0000256" key="2">
    <source>
        <dbReference type="SAM" id="MobiDB-lite"/>
    </source>
</evidence>
<evidence type="ECO:0000305" key="3"/>
<gene>
    <name type="ORF">FV3-020R</name>
</gene>
<organismHost>
    <name type="scientific">Dryophytes versicolor</name>
    <name type="common">chameleon treefrog</name>
    <dbReference type="NCBI Taxonomy" id="30343"/>
</organismHost>
<organismHost>
    <name type="scientific">Lithobates pipiens</name>
    <name type="common">Northern leopard frog</name>
    <name type="synonym">Rana pipiens</name>
    <dbReference type="NCBI Taxonomy" id="8404"/>
</organismHost>
<organismHost>
    <name type="scientific">Lithobates sylvaticus</name>
    <name type="common">Wood frog</name>
    <name type="synonym">Rana sylvatica</name>
    <dbReference type="NCBI Taxonomy" id="45438"/>
</organismHost>
<organismHost>
    <name type="scientific">Notophthalmus viridescens</name>
    <name type="common">Eastern newt</name>
    <name type="synonym">Triturus viridescens</name>
    <dbReference type="NCBI Taxonomy" id="8316"/>
</organismHost>